<evidence type="ECO:0000255" key="1">
    <source>
        <dbReference type="HAMAP-Rule" id="MF_02013"/>
    </source>
</evidence>
<keyword id="KW-0131">Cell cycle</keyword>
<keyword id="KW-0132">Cell division</keyword>
<keyword id="KW-0175">Coiled coil</keyword>
<keyword id="KW-0963">Cytoplasm</keyword>
<keyword id="KW-0717">Septation</keyword>
<accession>C5D5R1</accession>
<dbReference type="EMBL" id="CP001638">
    <property type="protein sequence ID" value="ACS25329.1"/>
    <property type="molecule type" value="Genomic_DNA"/>
</dbReference>
<dbReference type="SMR" id="C5D5R1"/>
<dbReference type="STRING" id="471223.GWCH70_2635"/>
<dbReference type="KEGG" id="gwc:GWCH70_2635"/>
<dbReference type="eggNOG" id="COG3027">
    <property type="taxonomic scope" value="Bacteria"/>
</dbReference>
<dbReference type="HOGENOM" id="CLU_116623_4_0_9"/>
<dbReference type="OrthoDB" id="9808604at2"/>
<dbReference type="GO" id="GO:0032153">
    <property type="term" value="C:cell division site"/>
    <property type="evidence" value="ECO:0007669"/>
    <property type="project" value="TreeGrafter"/>
</dbReference>
<dbReference type="GO" id="GO:0030428">
    <property type="term" value="C:cell septum"/>
    <property type="evidence" value="ECO:0007669"/>
    <property type="project" value="TreeGrafter"/>
</dbReference>
<dbReference type="GO" id="GO:0005829">
    <property type="term" value="C:cytosol"/>
    <property type="evidence" value="ECO:0007669"/>
    <property type="project" value="TreeGrafter"/>
</dbReference>
<dbReference type="GO" id="GO:0005886">
    <property type="term" value="C:plasma membrane"/>
    <property type="evidence" value="ECO:0007669"/>
    <property type="project" value="UniProtKB-UniRule"/>
</dbReference>
<dbReference type="GO" id="GO:0000917">
    <property type="term" value="P:division septum assembly"/>
    <property type="evidence" value="ECO:0007669"/>
    <property type="project" value="UniProtKB-KW"/>
</dbReference>
<dbReference type="GO" id="GO:0043093">
    <property type="term" value="P:FtsZ-dependent cytokinesis"/>
    <property type="evidence" value="ECO:0007669"/>
    <property type="project" value="TreeGrafter"/>
</dbReference>
<dbReference type="GO" id="GO:0000921">
    <property type="term" value="P:septin ring assembly"/>
    <property type="evidence" value="ECO:0007669"/>
    <property type="project" value="TreeGrafter"/>
</dbReference>
<dbReference type="Gene3D" id="6.10.250.790">
    <property type="match status" value="1"/>
</dbReference>
<dbReference type="HAMAP" id="MF_02013">
    <property type="entry name" value="ZapA_type2"/>
    <property type="match status" value="1"/>
</dbReference>
<dbReference type="InterPro" id="IPR053712">
    <property type="entry name" value="Bac_CellDiv_Activator"/>
</dbReference>
<dbReference type="InterPro" id="IPR007838">
    <property type="entry name" value="Cell_div_ZapA-like"/>
</dbReference>
<dbReference type="InterPro" id="IPR036192">
    <property type="entry name" value="Cell_div_ZapA-like_sf"/>
</dbReference>
<dbReference type="InterPro" id="IPR023688">
    <property type="entry name" value="Cell_div_ZapA_firmicutes"/>
</dbReference>
<dbReference type="NCBIfam" id="NF010724">
    <property type="entry name" value="PRK14126.1"/>
    <property type="match status" value="1"/>
</dbReference>
<dbReference type="PANTHER" id="PTHR34981">
    <property type="entry name" value="CELL DIVISION PROTEIN ZAPA"/>
    <property type="match status" value="1"/>
</dbReference>
<dbReference type="PANTHER" id="PTHR34981:SF1">
    <property type="entry name" value="CELL DIVISION PROTEIN ZAPA"/>
    <property type="match status" value="1"/>
</dbReference>
<dbReference type="Pfam" id="PF05164">
    <property type="entry name" value="ZapA"/>
    <property type="match status" value="1"/>
</dbReference>
<dbReference type="SUPFAM" id="SSF102829">
    <property type="entry name" value="Cell division protein ZapA-like"/>
    <property type="match status" value="1"/>
</dbReference>
<organism>
    <name type="scientific">Geobacillus sp. (strain WCH70)</name>
    <dbReference type="NCBI Taxonomy" id="471223"/>
    <lineage>
        <taxon>Bacteria</taxon>
        <taxon>Bacillati</taxon>
        <taxon>Bacillota</taxon>
        <taxon>Bacilli</taxon>
        <taxon>Bacillales</taxon>
        <taxon>Anoxybacillaceae</taxon>
        <taxon>Geobacillus</taxon>
    </lineage>
</organism>
<sequence>MAEQQKTRVTVDIYGQQYTIVGTESSSHIRLVASIVDDKMREISEKNPTLDISKLAVLTAINIVHDYIKLKEEYDRLLQKLHKEKDE</sequence>
<gene>
    <name evidence="1" type="primary">zapA</name>
    <name type="ordered locus">GWCH70_2635</name>
</gene>
<feature type="chain" id="PRO_1000216413" description="Cell division protein ZapA">
    <location>
        <begin position="1"/>
        <end position="87"/>
    </location>
</feature>
<feature type="coiled-coil region" evidence="1">
    <location>
        <begin position="64"/>
        <end position="87"/>
    </location>
</feature>
<name>ZAPA_GEOSW</name>
<protein>
    <recommendedName>
        <fullName evidence="1">Cell division protein ZapA</fullName>
    </recommendedName>
    <alternativeName>
        <fullName evidence="1">Z ring-associated protein ZapA</fullName>
    </alternativeName>
</protein>
<reference key="1">
    <citation type="submission" date="2009-06" db="EMBL/GenBank/DDBJ databases">
        <title>Complete sequence of chromosome of Geopacillus sp. WCH70.</title>
        <authorList>
            <consortium name="US DOE Joint Genome Institute"/>
            <person name="Lucas S."/>
            <person name="Copeland A."/>
            <person name="Lapidus A."/>
            <person name="Glavina del Rio T."/>
            <person name="Dalin E."/>
            <person name="Tice H."/>
            <person name="Bruce D."/>
            <person name="Goodwin L."/>
            <person name="Pitluck S."/>
            <person name="Chertkov O."/>
            <person name="Brettin T."/>
            <person name="Detter J.C."/>
            <person name="Han C."/>
            <person name="Larimer F."/>
            <person name="Land M."/>
            <person name="Hauser L."/>
            <person name="Kyrpides N."/>
            <person name="Mikhailova N."/>
            <person name="Brumm P."/>
            <person name="Mead D.A."/>
            <person name="Richardson P."/>
        </authorList>
    </citation>
    <scope>NUCLEOTIDE SEQUENCE [LARGE SCALE GENOMIC DNA]</scope>
    <source>
        <strain>WCH70</strain>
    </source>
</reference>
<comment type="function">
    <text evidence="1">Activator of cell division through the inhibition of FtsZ GTPase activity, therefore promoting FtsZ assembly into bundles of protofilaments necessary for the formation of the division Z ring. It is recruited early at mid-cell but it is not essential for cell division.</text>
</comment>
<comment type="subunit">
    <text evidence="1">Homodimer. Interacts with FtsZ.</text>
</comment>
<comment type="subcellular location">
    <subcellularLocation>
        <location evidence="1">Cytoplasm</location>
    </subcellularLocation>
    <text evidence="1">Localizes at mid-cell. In sporulating cells, localizes near the cell poles.</text>
</comment>
<comment type="similarity">
    <text evidence="1">Belongs to the ZapA family. Type 2 subfamily.</text>
</comment>
<proteinExistence type="inferred from homology"/>